<dbReference type="EC" id="3.5.1.47" evidence="1"/>
<dbReference type="EMBL" id="CP000002">
    <property type="protein sequence ID" value="AAU23172.1"/>
    <property type="molecule type" value="Genomic_DNA"/>
</dbReference>
<dbReference type="EMBL" id="AE017333">
    <property type="protein sequence ID" value="AAU40530.1"/>
    <property type="molecule type" value="Genomic_DNA"/>
</dbReference>
<dbReference type="RefSeq" id="WP_003181321.1">
    <property type="nucleotide sequence ID" value="NC_006322.1"/>
</dbReference>
<dbReference type="SMR" id="Q65K84"/>
<dbReference type="STRING" id="279010.BL05143"/>
<dbReference type="MEROPS" id="M20.A27"/>
<dbReference type="KEGG" id="bld:BLi01633"/>
<dbReference type="KEGG" id="bli:BL05143"/>
<dbReference type="eggNOG" id="COG1473">
    <property type="taxonomic scope" value="Bacteria"/>
</dbReference>
<dbReference type="HOGENOM" id="CLU_023257_0_1_9"/>
<dbReference type="UniPathway" id="UPA00034">
    <property type="reaction ID" value="UER00024"/>
</dbReference>
<dbReference type="Proteomes" id="UP000000606">
    <property type="component" value="Chromosome"/>
</dbReference>
<dbReference type="GO" id="GO:0050118">
    <property type="term" value="F:N-acetyldiaminopimelate deacetylase activity"/>
    <property type="evidence" value="ECO:0007669"/>
    <property type="project" value="UniProtKB-UniRule"/>
</dbReference>
<dbReference type="GO" id="GO:0019877">
    <property type="term" value="P:diaminopimelate biosynthetic process"/>
    <property type="evidence" value="ECO:0007669"/>
    <property type="project" value="UniProtKB-UniRule"/>
</dbReference>
<dbReference type="GO" id="GO:0009089">
    <property type="term" value="P:lysine biosynthetic process via diaminopimelate"/>
    <property type="evidence" value="ECO:0007669"/>
    <property type="project" value="UniProtKB-UniRule"/>
</dbReference>
<dbReference type="CDD" id="cd05670">
    <property type="entry name" value="M20_Acy1_YkuR-like"/>
    <property type="match status" value="1"/>
</dbReference>
<dbReference type="FunFam" id="3.30.70.360:FF:000001">
    <property type="entry name" value="N-acetyldiaminopimelate deacetylase"/>
    <property type="match status" value="1"/>
</dbReference>
<dbReference type="Gene3D" id="3.30.70.360">
    <property type="match status" value="1"/>
</dbReference>
<dbReference type="Gene3D" id="3.40.630.10">
    <property type="entry name" value="Zn peptidases"/>
    <property type="match status" value="1"/>
</dbReference>
<dbReference type="HAMAP" id="MF_01692">
    <property type="entry name" value="DapEL"/>
    <property type="match status" value="1"/>
</dbReference>
<dbReference type="InterPro" id="IPR023905">
    <property type="entry name" value="AcetylDAP_deacetylase"/>
</dbReference>
<dbReference type="InterPro" id="IPR017439">
    <property type="entry name" value="Amidohydrolase"/>
</dbReference>
<dbReference type="InterPro" id="IPR036264">
    <property type="entry name" value="Bact_exopeptidase_dim_dom"/>
</dbReference>
<dbReference type="InterPro" id="IPR002933">
    <property type="entry name" value="Peptidase_M20"/>
</dbReference>
<dbReference type="InterPro" id="IPR011650">
    <property type="entry name" value="Peptidase_M20_dimer"/>
</dbReference>
<dbReference type="NCBIfam" id="TIGR01891">
    <property type="entry name" value="amidohydrolases"/>
    <property type="match status" value="1"/>
</dbReference>
<dbReference type="PANTHER" id="PTHR11014:SF98">
    <property type="entry name" value="N-ACETYLDIAMINOPIMELATE DEACETYLASE"/>
    <property type="match status" value="1"/>
</dbReference>
<dbReference type="PANTHER" id="PTHR11014">
    <property type="entry name" value="PEPTIDASE M20 FAMILY MEMBER"/>
    <property type="match status" value="1"/>
</dbReference>
<dbReference type="Pfam" id="PF07687">
    <property type="entry name" value="M20_dimer"/>
    <property type="match status" value="1"/>
</dbReference>
<dbReference type="Pfam" id="PF01546">
    <property type="entry name" value="Peptidase_M20"/>
    <property type="match status" value="1"/>
</dbReference>
<dbReference type="PIRSF" id="PIRSF005962">
    <property type="entry name" value="Pept_M20D_amidohydro"/>
    <property type="match status" value="1"/>
</dbReference>
<dbReference type="SUPFAM" id="SSF55031">
    <property type="entry name" value="Bacterial exopeptidase dimerisation domain"/>
    <property type="match status" value="1"/>
</dbReference>
<dbReference type="SUPFAM" id="SSF53187">
    <property type="entry name" value="Zn-dependent exopeptidases"/>
    <property type="match status" value="1"/>
</dbReference>
<keyword id="KW-0028">Amino-acid biosynthesis</keyword>
<keyword id="KW-0220">Diaminopimelate biosynthesis</keyword>
<keyword id="KW-0378">Hydrolase</keyword>
<keyword id="KW-0457">Lysine biosynthesis</keyword>
<keyword id="KW-1185">Reference proteome</keyword>
<gene>
    <name type="ordered locus">BLi01633</name>
    <name type="ordered locus">BL05143</name>
</gene>
<sequence length="374" mass="41408">MKLDELAAIRRDLHQIPELGFQEYKTQAYLLNHLAKHPEGRIEIEKWRTGLFVKVKGTAPEKILAYRADMDGLSIREDTGYSFSSVHQDRMHACGHDFHMTIALGIIDHFVRHPVKQDLLFLFQPAEEGPGGAEPMLESDLFKKWEPSMITALHIAPELPVGTIGTKSGLLFANTSELVIELEGKGGHAAYPHLAEDMVVAASSLVTQMQSIVARNVDPLDSAVITIGTITGGSAQNIIAQEARLEGTIRTLSPASMEQVKKRIEAMVRGLETAYQCSGKVSYPAAYYQVCNSSDLVEDFMQFVSENGLAEVVRSKEAMTGEDFGYMLKKYPGFMFWLGVDSPYGLHHAKLQPKEEALETAVRVMTAYFSSKAN</sequence>
<evidence type="ECO:0000255" key="1">
    <source>
        <dbReference type="HAMAP-Rule" id="MF_01692"/>
    </source>
</evidence>
<name>DAPEL_BACLD</name>
<feature type="chain" id="PRO_0000376748" description="N-acetyldiaminopimelate deacetylase">
    <location>
        <begin position="1"/>
        <end position="374"/>
    </location>
</feature>
<feature type="active site" evidence="1">
    <location>
        <position position="69"/>
    </location>
</feature>
<feature type="active site" description="Proton acceptor" evidence="1">
    <location>
        <position position="128"/>
    </location>
</feature>
<accession>Q65K84</accession>
<accession>Q62VN6</accession>
<comment type="function">
    <text evidence="1">Catalyzes the conversion of N-acetyl-diaminopimelate to diaminopimelate and acetate.</text>
</comment>
<comment type="catalytic activity">
    <reaction evidence="1">
        <text>N-acetyl-(2S,6S)-2,6-diaminopimelate + H2O = (2S,6S)-2,6-diaminopimelate + acetate</text>
        <dbReference type="Rhea" id="RHEA:20405"/>
        <dbReference type="ChEBI" id="CHEBI:15377"/>
        <dbReference type="ChEBI" id="CHEBI:30089"/>
        <dbReference type="ChEBI" id="CHEBI:57609"/>
        <dbReference type="ChEBI" id="CHEBI:58767"/>
        <dbReference type="EC" id="3.5.1.47"/>
    </reaction>
</comment>
<comment type="pathway">
    <text evidence="1">Amino-acid biosynthesis; L-lysine biosynthesis via DAP pathway; LL-2,6-diaminopimelate from (S)-tetrahydrodipicolinate (acetylase route): step 3/3.</text>
</comment>
<comment type="similarity">
    <text evidence="1">Belongs to the peptidase M20A family. N-acetyldiaminopimelate deacetylase subfamily.</text>
</comment>
<proteinExistence type="inferred from homology"/>
<organism>
    <name type="scientific">Bacillus licheniformis (strain ATCC 14580 / DSM 13 / JCM 2505 / CCUG 7422 / NBRC 12200 / NCIMB 9375 / NCTC 10341 / NRRL NRS-1264 / Gibson 46)</name>
    <dbReference type="NCBI Taxonomy" id="279010"/>
    <lineage>
        <taxon>Bacteria</taxon>
        <taxon>Bacillati</taxon>
        <taxon>Bacillota</taxon>
        <taxon>Bacilli</taxon>
        <taxon>Bacillales</taxon>
        <taxon>Bacillaceae</taxon>
        <taxon>Bacillus</taxon>
    </lineage>
</organism>
<protein>
    <recommendedName>
        <fullName evidence="1">N-acetyldiaminopimelate deacetylase</fullName>
        <ecNumber evidence="1">3.5.1.47</ecNumber>
    </recommendedName>
</protein>
<reference key="1">
    <citation type="journal article" date="2004" name="J. Mol. Microbiol. Biotechnol.">
        <title>The complete genome sequence of Bacillus licheniformis DSM13, an organism with great industrial potential.</title>
        <authorList>
            <person name="Veith B."/>
            <person name="Herzberg C."/>
            <person name="Steckel S."/>
            <person name="Feesche J."/>
            <person name="Maurer K.H."/>
            <person name="Ehrenreich P."/>
            <person name="Baeumer S."/>
            <person name="Henne A."/>
            <person name="Liesegang H."/>
            <person name="Merkl R."/>
            <person name="Ehrenreich A."/>
            <person name="Gottschalk G."/>
        </authorList>
    </citation>
    <scope>NUCLEOTIDE SEQUENCE [LARGE SCALE GENOMIC DNA]</scope>
    <source>
        <strain>ATCC 14580 / DSM 13 / JCM 2505 / CCUG 7422 / NBRC 12200 / NCIMB 9375 / NCTC 10341 / NRRL NRS-1264 / Gibson 46</strain>
    </source>
</reference>
<reference key="2">
    <citation type="journal article" date="2004" name="Genome Biol.">
        <title>Complete genome sequence of the industrial bacterium Bacillus licheniformis and comparisons with closely related Bacillus species.</title>
        <authorList>
            <person name="Rey M.W."/>
            <person name="Ramaiya P."/>
            <person name="Nelson B.A."/>
            <person name="Brody-Karpin S.D."/>
            <person name="Zaretsky E.J."/>
            <person name="Tang M."/>
            <person name="Lopez de Leon A."/>
            <person name="Xiang H."/>
            <person name="Gusti V."/>
            <person name="Clausen I.G."/>
            <person name="Olsen P.B."/>
            <person name="Rasmussen M.D."/>
            <person name="Andersen J.T."/>
            <person name="Joergensen P.L."/>
            <person name="Larsen T.S."/>
            <person name="Sorokin A."/>
            <person name="Bolotin A."/>
            <person name="Lapidus A."/>
            <person name="Galleron N."/>
            <person name="Ehrlich S.D."/>
            <person name="Berka R.M."/>
        </authorList>
    </citation>
    <scope>NUCLEOTIDE SEQUENCE [LARGE SCALE GENOMIC DNA]</scope>
    <source>
        <strain>ATCC 14580 / DSM 13 / JCM 2505 / CCUG 7422 / NBRC 12200 / NCIMB 9375 / NCTC 10341 / NRRL NRS-1264 / Gibson 46</strain>
    </source>
</reference>